<accession>P97608</accession>
<accession>Q5U3Z8</accession>
<sequence>MGSPEGRFHFAIDRGGTFTDVFAQCPGGHVRVLKLLSEDPANYADAPTEGIRRILEQEEGVLLPRGRPLDTSRIASIRMGTTVATNALLERQGERVALLVTRGFRDLLHIGTQARPDLFDLAVPMPEVLYEEVLEVDERVVLYRGEPGAGSPVKGRTGDLLEIQQPVDLEALRGKLEGLLSRGIHSLAVVLMHSYTWAQHEQQVGTLARELGFTHVSLSSEVMPMVRIVPRGHTACADAYLTPTIQRYVQGFRRGFQGQLKNVQVLFMRSDGGLAPMDAFSGSRAVLSGPAGGVVGYSATTYHLEGGQPVIGFDMGGTSTDVSRYAGEFEHVFEASTAGVTLQAPQLDINTVAAGGGSRLFFRSGLFVVGPESAGAHPGPACYRKGGPVTVTDANLVLGRLLPASFPCIFGPGEDQPLSPEASRKALEAVAMEVNSFLTNGPCPASQLSLEEVAMGFVRVANEAMCRPIRALTQARGHDPSAHVLACFGGAGGQHACAIARALGMDTVHIHRHSGLLSALGLALADVVHEAQEPCSLSYTPETFAQLDQRLSRLEEQCVDALQVQGFPRSQISTESFLHLRYQGTDCALMVSAHQHPATACSPRAGDFGAAFVERYMREFGFIIPERPVVVDDVRVRGTGRSGLQLEDTPKIQTGPPHVEKVTQCYFEGGYQETPVYLLGELGYGHQLQGPCLIIDNNSTILVEPGCQAEVTDTGDIRISVGAEGPSMADTRLDPIQLSIFSHRFMSIAEQMGRILQRTAISTNIKERLDFSCALFGPDGGLVSNAPHIPVHLGAMQETVQFQIQHLGADLHPGDVLLSNHPSAGGSHLPDLTVITPVFWPGQTRPVFYVASRGHHADIGGITPGSMPPHSTTLQQEGAVFLSFKLVQGGVFQEEAVTEALRAPGKISGCSGTRNLHDNLSDLRAQVAANQKGIQLVGELIGQYGLDVVQAYMGHIQANAELAVRDMLRAFGTSRQARGLPLEVSAEDHMDDGSPICLRVQINLSQGSAVFDFTGSGSEVFGNLNAPRAITLSALIYCLRCLVGRDIPLNQGCLAPVRVIIPKGSILDPSPEAAVVGGNVLTSQRVVDVILGAFGACSASQGCMNNVTLGNARMGYYETVAGGAGAGPGWHGRSGVHSHMTNTRITDPEILESRYPVILRRFELRPGSGGRGRFRGGDGVVRELVFREEALLSVLTERRAFQPYGLHGGEPGARGLNLLIRKDGRTVNLGGKTSVTVYPGDVFCLHTPGGGGYGDPEDPAPPPGSPPLFPAFPERGSVFEYRRAQEAV</sequence>
<organism>
    <name type="scientific">Rattus norvegicus</name>
    <name type="common">Rat</name>
    <dbReference type="NCBI Taxonomy" id="10116"/>
    <lineage>
        <taxon>Eukaryota</taxon>
        <taxon>Metazoa</taxon>
        <taxon>Chordata</taxon>
        <taxon>Craniata</taxon>
        <taxon>Vertebrata</taxon>
        <taxon>Euteleostomi</taxon>
        <taxon>Mammalia</taxon>
        <taxon>Eutheria</taxon>
        <taxon>Euarchontoglires</taxon>
        <taxon>Glires</taxon>
        <taxon>Rodentia</taxon>
        <taxon>Myomorpha</taxon>
        <taxon>Muroidea</taxon>
        <taxon>Muridae</taxon>
        <taxon>Murinae</taxon>
        <taxon>Rattus</taxon>
    </lineage>
</organism>
<reference key="1">
    <citation type="journal article" date="1996" name="J. Biol. Chem.">
        <title>The amino acid sequence of rat kidney 5-oxo-L-prolinase determined by cDNA cloning.</title>
        <authorList>
            <person name="Ye G.-J."/>
            <person name="Breslow E."/>
            <person name="Meister A."/>
        </authorList>
    </citation>
    <scope>NUCLEOTIDE SEQUENCE [MRNA]</scope>
    <scope>PARTIAL PROTEIN SEQUENCE</scope>
    <scope>TISSUE SPECIFICITY</scope>
    <source>
        <strain>Sprague-Dawley</strain>
        <tissue>Kidney</tissue>
    </source>
</reference>
<reference key="2">
    <citation type="journal article" date="1997" name="J. Biol. Chem.">
        <authorList>
            <person name="Ye G.-J."/>
            <person name="Breslow E."/>
            <person name="Meister A."/>
        </authorList>
    </citation>
    <scope>ERRATUM OF PUBMED:8943290</scope>
</reference>
<reference key="3">
    <citation type="journal article" date="2004" name="Genome Res.">
        <title>The status, quality, and expansion of the NIH full-length cDNA project: the Mammalian Gene Collection (MGC).</title>
        <authorList>
            <consortium name="The MGC Project Team"/>
        </authorList>
    </citation>
    <scope>NUCLEOTIDE SEQUENCE [LARGE SCALE MRNA]</scope>
    <source>
        <tissue>Lung</tissue>
    </source>
</reference>
<reference key="4">
    <citation type="journal article" date="2012" name="Nat. Commun.">
        <title>Quantitative maps of protein phosphorylation sites across 14 different rat organs and tissues.</title>
        <authorList>
            <person name="Lundby A."/>
            <person name="Secher A."/>
            <person name="Lage K."/>
            <person name="Nordsborg N.B."/>
            <person name="Dmytriyev A."/>
            <person name="Lundby C."/>
            <person name="Olsen J.V."/>
        </authorList>
    </citation>
    <scope>PHOSPHORYLATION [LARGE SCALE ANALYSIS] AT SER-1265</scope>
    <scope>IDENTIFICATION BY MASS SPECTROMETRY [LARGE SCALE ANALYSIS]</scope>
</reference>
<gene>
    <name type="primary">Oplah</name>
</gene>
<keyword id="KW-0067">ATP-binding</keyword>
<keyword id="KW-0963">Cytoplasm</keyword>
<keyword id="KW-0903">Direct protein sequencing</keyword>
<keyword id="KW-0378">Hydrolase</keyword>
<keyword id="KW-0547">Nucleotide-binding</keyword>
<keyword id="KW-0597">Phosphoprotein</keyword>
<keyword id="KW-1185">Reference proteome</keyword>
<name>OPLA_RAT</name>
<proteinExistence type="evidence at protein level"/>
<feature type="chain" id="PRO_0000208579" description="5-oxoprolinase">
    <location>
        <begin position="1"/>
        <end position="1288"/>
    </location>
</feature>
<feature type="region of interest" description="Disordered" evidence="2">
    <location>
        <begin position="1248"/>
        <end position="1270"/>
    </location>
</feature>
<feature type="compositionally biased region" description="Pro residues" evidence="2">
    <location>
        <begin position="1259"/>
        <end position="1270"/>
    </location>
</feature>
<feature type="modified residue" description="Phosphoserine" evidence="5">
    <location>
        <position position="1265"/>
    </location>
</feature>
<feature type="sequence conflict" description="In Ref. 1; AAC52955." evidence="4" ref="1">
    <original>A</original>
    <variation>P</variation>
    <location>
        <position position="44"/>
    </location>
</feature>
<comment type="function">
    <text evidence="1">Catalyzes the cleavage of 5-oxo-L-proline to form L-glutamate coupled to the hydrolysis of ATP to ADP and inorganic phosphate.</text>
</comment>
<comment type="catalytic activity">
    <reaction evidence="1">
        <text>5-oxo-L-proline + ATP + 2 H2O = L-glutamate + ADP + phosphate + H(+)</text>
        <dbReference type="Rhea" id="RHEA:10348"/>
        <dbReference type="ChEBI" id="CHEBI:15377"/>
        <dbReference type="ChEBI" id="CHEBI:15378"/>
        <dbReference type="ChEBI" id="CHEBI:29985"/>
        <dbReference type="ChEBI" id="CHEBI:30616"/>
        <dbReference type="ChEBI" id="CHEBI:43474"/>
        <dbReference type="ChEBI" id="CHEBI:58402"/>
        <dbReference type="ChEBI" id="CHEBI:456216"/>
        <dbReference type="EC" id="3.5.2.9"/>
    </reaction>
</comment>
<comment type="subunit">
    <text>Homodimer.</text>
</comment>
<comment type="subcellular location">
    <subcellularLocation>
        <location evidence="1">Cytoplasm</location>
        <location evidence="1">Cytosol</location>
    </subcellularLocation>
</comment>
<comment type="tissue specificity">
    <text evidence="3">Expressed in testis, kidney and liver.</text>
</comment>
<comment type="similarity">
    <text evidence="4">Belongs to the oxoprolinase family.</text>
</comment>
<evidence type="ECO:0000250" key="1">
    <source>
        <dbReference type="UniProtKB" id="Q75WB5"/>
    </source>
</evidence>
<evidence type="ECO:0000256" key="2">
    <source>
        <dbReference type="SAM" id="MobiDB-lite"/>
    </source>
</evidence>
<evidence type="ECO:0000269" key="3">
    <source>
    </source>
</evidence>
<evidence type="ECO:0000305" key="4"/>
<evidence type="ECO:0007744" key="5">
    <source>
    </source>
</evidence>
<protein>
    <recommendedName>
        <fullName>5-oxoprolinase</fullName>
        <ecNumber evidence="1">3.5.2.9</ecNumber>
    </recommendedName>
    <alternativeName>
        <fullName>5-oxo-L-prolinase</fullName>
        <shortName>5-OPase</shortName>
    </alternativeName>
    <alternativeName>
        <fullName>Pyroglutamase</fullName>
    </alternativeName>
</protein>
<dbReference type="EC" id="3.5.2.9" evidence="1"/>
<dbReference type="EMBL" id="U70825">
    <property type="protein sequence ID" value="AAC52955.1"/>
    <property type="molecule type" value="mRNA"/>
</dbReference>
<dbReference type="EMBL" id="BC085330">
    <property type="protein sequence ID" value="AAH85330.1"/>
    <property type="molecule type" value="mRNA"/>
</dbReference>
<dbReference type="PIR" id="T42756">
    <property type="entry name" value="T42756"/>
</dbReference>
<dbReference type="RefSeq" id="NP_446356.1">
    <property type="nucleotide sequence ID" value="NM_053904.1"/>
</dbReference>
<dbReference type="RefSeq" id="XP_006241836.1">
    <property type="nucleotide sequence ID" value="XM_006241774.3"/>
</dbReference>
<dbReference type="RefSeq" id="XP_006241837.1">
    <property type="nucleotide sequence ID" value="XM_006241775.5"/>
</dbReference>
<dbReference type="RefSeq" id="XP_017450065.1">
    <property type="nucleotide sequence ID" value="XM_017594576.1"/>
</dbReference>
<dbReference type="RefSeq" id="XP_017450066.1">
    <property type="nucleotide sequence ID" value="XM_017594577.1"/>
</dbReference>
<dbReference type="RefSeq" id="XP_038934184.1">
    <property type="nucleotide sequence ID" value="XM_039078256.2"/>
</dbReference>
<dbReference type="RefSeq" id="XP_038934185.1">
    <property type="nucleotide sequence ID" value="XM_039078257.2"/>
</dbReference>
<dbReference type="RefSeq" id="XP_038934186.1">
    <property type="nucleotide sequence ID" value="XM_039078258.2"/>
</dbReference>
<dbReference type="RefSeq" id="XP_038934187.1">
    <property type="nucleotide sequence ID" value="XM_039078259.2"/>
</dbReference>
<dbReference type="SMR" id="P97608"/>
<dbReference type="FunCoup" id="P97608">
    <property type="interactions" value="602"/>
</dbReference>
<dbReference type="IntAct" id="P97608">
    <property type="interactions" value="2"/>
</dbReference>
<dbReference type="STRING" id="10116.ENSRNOP00000074523"/>
<dbReference type="iPTMnet" id="P97608"/>
<dbReference type="PhosphoSitePlus" id="P97608"/>
<dbReference type="jPOST" id="P97608"/>
<dbReference type="PaxDb" id="10116-ENSRNOP00000016424"/>
<dbReference type="Ensembl" id="ENSRNOT00000077314.2">
    <property type="protein sequence ID" value="ENSRNOP00000074664.1"/>
    <property type="gene ID" value="ENSRNOG00000011781.7"/>
</dbReference>
<dbReference type="GeneID" id="116684"/>
<dbReference type="KEGG" id="rno:116684"/>
<dbReference type="AGR" id="RGD:620956"/>
<dbReference type="CTD" id="26873"/>
<dbReference type="RGD" id="620956">
    <property type="gene designation" value="Oplah"/>
</dbReference>
<dbReference type="eggNOG" id="KOG1939">
    <property type="taxonomic scope" value="Eukaryota"/>
</dbReference>
<dbReference type="GeneTree" id="ENSGT00390000013463"/>
<dbReference type="InParanoid" id="P97608"/>
<dbReference type="OrthoDB" id="3643at2759"/>
<dbReference type="PhylomeDB" id="P97608"/>
<dbReference type="TreeFam" id="TF300520"/>
<dbReference type="BioCyc" id="MetaCyc:MONOMER-10109"/>
<dbReference type="BRENDA" id="3.5.2.9">
    <property type="organism ID" value="5301"/>
</dbReference>
<dbReference type="Reactome" id="R-RNO-174403">
    <property type="pathway name" value="Glutathione synthesis and recycling"/>
</dbReference>
<dbReference type="PRO" id="PR:P97608"/>
<dbReference type="Proteomes" id="UP000002494">
    <property type="component" value="Chromosome 7"/>
</dbReference>
<dbReference type="Bgee" id="ENSRNOG00000011781">
    <property type="expression patterns" value="Expressed in adult mammalian kidney and 19 other cell types or tissues"/>
</dbReference>
<dbReference type="GO" id="GO:0005829">
    <property type="term" value="C:cytosol"/>
    <property type="evidence" value="ECO:0000250"/>
    <property type="project" value="UniProtKB"/>
</dbReference>
<dbReference type="GO" id="GO:0017168">
    <property type="term" value="F:5-oxoprolinase (ATP-hydrolyzing) activity"/>
    <property type="evidence" value="ECO:0000250"/>
    <property type="project" value="UniProtKB"/>
</dbReference>
<dbReference type="GO" id="GO:0005524">
    <property type="term" value="F:ATP binding"/>
    <property type="evidence" value="ECO:0007669"/>
    <property type="project" value="UniProtKB-KW"/>
</dbReference>
<dbReference type="GO" id="GO:0042802">
    <property type="term" value="F:identical protein binding"/>
    <property type="evidence" value="ECO:0000266"/>
    <property type="project" value="RGD"/>
</dbReference>
<dbReference type="GO" id="GO:0006749">
    <property type="term" value="P:glutathione metabolic process"/>
    <property type="evidence" value="ECO:0000318"/>
    <property type="project" value="GO_Central"/>
</dbReference>
<dbReference type="InterPro" id="IPR049517">
    <property type="entry name" value="ACX-like_C"/>
</dbReference>
<dbReference type="InterPro" id="IPR008040">
    <property type="entry name" value="Hydant_A_N"/>
</dbReference>
<dbReference type="InterPro" id="IPR002821">
    <property type="entry name" value="Hydantoinase_A"/>
</dbReference>
<dbReference type="InterPro" id="IPR003692">
    <property type="entry name" value="Hydantoinase_B"/>
</dbReference>
<dbReference type="InterPro" id="IPR045079">
    <property type="entry name" value="Oxoprolinase-like"/>
</dbReference>
<dbReference type="PANTHER" id="PTHR11365:SF2">
    <property type="entry name" value="5-OXOPROLINASE"/>
    <property type="match status" value="1"/>
</dbReference>
<dbReference type="PANTHER" id="PTHR11365">
    <property type="entry name" value="5-OXOPROLINASE RELATED"/>
    <property type="match status" value="1"/>
</dbReference>
<dbReference type="Pfam" id="PF19278">
    <property type="entry name" value="Hydant_A_C"/>
    <property type="match status" value="1"/>
</dbReference>
<dbReference type="Pfam" id="PF05378">
    <property type="entry name" value="Hydant_A_N"/>
    <property type="match status" value="1"/>
</dbReference>
<dbReference type="Pfam" id="PF01968">
    <property type="entry name" value="Hydantoinase_A"/>
    <property type="match status" value="1"/>
</dbReference>
<dbReference type="Pfam" id="PF02538">
    <property type="entry name" value="Hydantoinase_B"/>
    <property type="match status" value="1"/>
</dbReference>